<evidence type="ECO:0000250" key="1"/>
<evidence type="ECO:0000255" key="2">
    <source>
        <dbReference type="PROSITE-ProRule" id="PRU00190"/>
    </source>
</evidence>
<evidence type="ECO:0000303" key="3">
    <source>
    </source>
</evidence>
<keyword id="KW-0025">Alternative splicing</keyword>
<keyword id="KW-0156">Chromatin regulator</keyword>
<keyword id="KW-0158">Chromosome</keyword>
<keyword id="KW-0489">Methyltransferase</keyword>
<keyword id="KW-0539">Nucleus</keyword>
<keyword id="KW-1185">Reference proteome</keyword>
<keyword id="KW-0949">S-adenosyl-L-methionine</keyword>
<keyword id="KW-0808">Transferase</keyword>
<protein>
    <recommendedName>
        <fullName>Histone-lysine N-methyltransferase ASHR2</fullName>
        <ecNumber>2.1.1.-</ecNumber>
    </recommendedName>
    <alternativeName>
        <fullName>ASH1-related protein 2</fullName>
    </alternativeName>
    <alternativeName>
        <fullName>Protein SET DOMAIN GROUP 39</fullName>
    </alternativeName>
</protein>
<name>ASHR2_ARATH</name>
<sequence length="398" mass="43761">MINDGGAKPETLLRVAEIGGRGRSLVAAQSLRAGQVILRESPLLLYSAFPFLSSSVSPYCDHCFRLLASSAHQKCQSCSLVSFCSPNCFASHTPWLCESLRRLHQSSSSAFSDQPSDRQVQARFLLSAYNLAAASPSDFQILLSLQGSGSSNGDPSCSAGDSAAAGFLHSLLSSVCPSLPVSISPDLTAALLSKDKVNAFGLMEPCSVSNEKRSVRAYGIYPKTSFFNHDCLPNACRFDYVDSASDGNTDIIIRMIHDVPEGREVCLSYFPVNMNYSSRQKRLLEDYGFKCDCDRCKVEFSWSEGEEDENEIMEEMEDQDEQEEMEDSVGENEEEVCGNGVDDESNFPHAYFFVRYMCEKENCFGTLAPLPPKTHDASRVLECNVCGSVKEDEVGVNQ</sequence>
<dbReference type="EC" id="2.1.1.-"/>
<dbReference type="EMBL" id="AC005917">
    <property type="protein sequence ID" value="AAD10162.2"/>
    <property type="molecule type" value="Genomic_DNA"/>
</dbReference>
<dbReference type="EMBL" id="CP002685">
    <property type="protein sequence ID" value="AEC06906.1"/>
    <property type="molecule type" value="Genomic_DNA"/>
</dbReference>
<dbReference type="EMBL" id="CP002685">
    <property type="protein sequence ID" value="AEC06907.1"/>
    <property type="molecule type" value="Genomic_DNA"/>
</dbReference>
<dbReference type="EMBL" id="AY034953">
    <property type="protein sequence ID" value="AAK59459.1"/>
    <property type="molecule type" value="mRNA"/>
</dbReference>
<dbReference type="EMBL" id="AY070027">
    <property type="protein sequence ID" value="AAL47498.1"/>
    <property type="molecule type" value="mRNA"/>
</dbReference>
<dbReference type="EMBL" id="BT004010">
    <property type="protein sequence ID" value="AAO42047.1"/>
    <property type="molecule type" value="mRNA"/>
</dbReference>
<dbReference type="PIR" id="C84579">
    <property type="entry name" value="C84579"/>
</dbReference>
<dbReference type="RefSeq" id="NP_565457.1">
    <molecule id="Q9ZUM9-2"/>
    <property type="nucleotide sequence ID" value="NM_127522.2"/>
</dbReference>
<dbReference type="RefSeq" id="NP_849991.1">
    <molecule id="Q9ZUM9-1"/>
    <property type="nucleotide sequence ID" value="NM_179660.2"/>
</dbReference>
<dbReference type="SMR" id="Q9ZUM9"/>
<dbReference type="BioGRID" id="1838">
    <property type="interactions" value="1"/>
</dbReference>
<dbReference type="FunCoup" id="Q9ZUM9">
    <property type="interactions" value="232"/>
</dbReference>
<dbReference type="STRING" id="3702.Q9ZUM9"/>
<dbReference type="PaxDb" id="3702-AT2G19640.2"/>
<dbReference type="ProteomicsDB" id="246788">
    <molecule id="Q9ZUM9-1"/>
</dbReference>
<dbReference type="EnsemblPlants" id="AT2G19640.1">
    <molecule id="Q9ZUM9-2"/>
    <property type="protein sequence ID" value="AT2G19640.1"/>
    <property type="gene ID" value="AT2G19640"/>
</dbReference>
<dbReference type="EnsemblPlants" id="AT2G19640.2">
    <molecule id="Q9ZUM9-1"/>
    <property type="protein sequence ID" value="AT2G19640.2"/>
    <property type="gene ID" value="AT2G19640"/>
</dbReference>
<dbReference type="GeneID" id="816483"/>
<dbReference type="Gramene" id="AT2G19640.1">
    <molecule id="Q9ZUM9-2"/>
    <property type="protein sequence ID" value="AT2G19640.1"/>
    <property type="gene ID" value="AT2G19640"/>
</dbReference>
<dbReference type="Gramene" id="AT2G19640.2">
    <molecule id="Q9ZUM9-1"/>
    <property type="protein sequence ID" value="AT2G19640.2"/>
    <property type="gene ID" value="AT2G19640"/>
</dbReference>
<dbReference type="KEGG" id="ath:AT2G19640"/>
<dbReference type="Araport" id="AT2G19640"/>
<dbReference type="TAIR" id="AT2G19640">
    <property type="gene designation" value="ASHR2"/>
</dbReference>
<dbReference type="eggNOG" id="KOG2084">
    <property type="taxonomic scope" value="Eukaryota"/>
</dbReference>
<dbReference type="HOGENOM" id="CLU_064842_0_0_1"/>
<dbReference type="InParanoid" id="Q9ZUM9"/>
<dbReference type="OMA" id="VIRMIHD"/>
<dbReference type="PhylomeDB" id="Q9ZUM9"/>
<dbReference type="PRO" id="PR:Q9ZUM9"/>
<dbReference type="Proteomes" id="UP000006548">
    <property type="component" value="Chromosome 2"/>
</dbReference>
<dbReference type="ExpressionAtlas" id="Q9ZUM9">
    <property type="expression patterns" value="baseline and differential"/>
</dbReference>
<dbReference type="GO" id="GO:0005694">
    <property type="term" value="C:chromosome"/>
    <property type="evidence" value="ECO:0007669"/>
    <property type="project" value="UniProtKB-SubCell"/>
</dbReference>
<dbReference type="GO" id="GO:0005634">
    <property type="term" value="C:nucleus"/>
    <property type="evidence" value="ECO:0007669"/>
    <property type="project" value="UniProtKB-SubCell"/>
</dbReference>
<dbReference type="GO" id="GO:0042054">
    <property type="term" value="F:histone methyltransferase activity"/>
    <property type="evidence" value="ECO:0007669"/>
    <property type="project" value="RHEA"/>
</dbReference>
<dbReference type="GO" id="GO:0032259">
    <property type="term" value="P:methylation"/>
    <property type="evidence" value="ECO:0007669"/>
    <property type="project" value="UniProtKB-KW"/>
</dbReference>
<dbReference type="CDD" id="cd20071">
    <property type="entry name" value="SET_SMYD"/>
    <property type="match status" value="1"/>
</dbReference>
<dbReference type="Gene3D" id="1.10.220.160">
    <property type="match status" value="1"/>
</dbReference>
<dbReference type="Gene3D" id="6.10.140.2220">
    <property type="match status" value="1"/>
</dbReference>
<dbReference type="Gene3D" id="2.170.270.10">
    <property type="entry name" value="SET domain"/>
    <property type="match status" value="1"/>
</dbReference>
<dbReference type="InterPro" id="IPR044238">
    <property type="entry name" value="ASHR2-like"/>
</dbReference>
<dbReference type="InterPro" id="IPR001214">
    <property type="entry name" value="SET_dom"/>
</dbReference>
<dbReference type="InterPro" id="IPR046341">
    <property type="entry name" value="SET_dom_sf"/>
</dbReference>
<dbReference type="PANTHER" id="PTHR47420">
    <property type="entry name" value="HISTONE-LYSINE N-METHYLTRANSFERASE ASHR2"/>
    <property type="match status" value="1"/>
</dbReference>
<dbReference type="PANTHER" id="PTHR47420:SF3">
    <property type="entry name" value="HISTONE-LYSINE N-METHYLTRANSFERASE ASHR2"/>
    <property type="match status" value="1"/>
</dbReference>
<dbReference type="Pfam" id="PF00856">
    <property type="entry name" value="SET"/>
    <property type="match status" value="1"/>
</dbReference>
<dbReference type="SMART" id="SM00317">
    <property type="entry name" value="SET"/>
    <property type="match status" value="1"/>
</dbReference>
<dbReference type="SUPFAM" id="SSF82199">
    <property type="entry name" value="SET domain"/>
    <property type="match status" value="1"/>
</dbReference>
<dbReference type="PROSITE" id="PS50280">
    <property type="entry name" value="SET"/>
    <property type="match status" value="1"/>
</dbReference>
<accession>Q9ZUM9</accession>
<accession>Q84WB9</accession>
<accession>Q94CD2</accession>
<gene>
    <name type="primary">ASHR2</name>
    <name type="synonym">SDG39</name>
    <name type="synonym">SET39</name>
    <name type="ordered locus">At2g19640</name>
    <name type="ORF">F3P11.24</name>
</gene>
<organism>
    <name type="scientific">Arabidopsis thaliana</name>
    <name type="common">Mouse-ear cress</name>
    <dbReference type="NCBI Taxonomy" id="3702"/>
    <lineage>
        <taxon>Eukaryota</taxon>
        <taxon>Viridiplantae</taxon>
        <taxon>Streptophyta</taxon>
        <taxon>Embryophyta</taxon>
        <taxon>Tracheophyta</taxon>
        <taxon>Spermatophyta</taxon>
        <taxon>Magnoliopsida</taxon>
        <taxon>eudicotyledons</taxon>
        <taxon>Gunneridae</taxon>
        <taxon>Pentapetalae</taxon>
        <taxon>rosids</taxon>
        <taxon>malvids</taxon>
        <taxon>Brassicales</taxon>
        <taxon>Brassicaceae</taxon>
        <taxon>Camelineae</taxon>
        <taxon>Arabidopsis</taxon>
    </lineage>
</organism>
<feature type="chain" id="PRO_0000233375" description="Histone-lysine N-methyltransferase ASHR2">
    <location>
        <begin position="1"/>
        <end position="398"/>
    </location>
</feature>
<feature type="domain" description="SET" evidence="2">
    <location>
        <begin position="11"/>
        <end position="270"/>
    </location>
</feature>
<feature type="splice variant" id="VSP_018134" description="In isoform 2." evidence="3">
    <original>GENEEEVCGNGV</original>
    <variation>DICVRRRIVLAL</variation>
    <location>
        <begin position="330"/>
        <end position="341"/>
    </location>
</feature>
<feature type="splice variant" id="VSP_018135" description="In isoform 2." evidence="3">
    <location>
        <begin position="342"/>
        <end position="398"/>
    </location>
</feature>
<proteinExistence type="evidence at transcript level"/>
<comment type="function">
    <text evidence="1">Histone methyltransferase.</text>
</comment>
<comment type="catalytic activity">
    <reaction>
        <text>L-lysyl-[histone] + S-adenosyl-L-methionine = N(6)-methyl-L-lysyl-[histone] + S-adenosyl-L-homocysteine + H(+)</text>
        <dbReference type="Rhea" id="RHEA:10024"/>
        <dbReference type="Rhea" id="RHEA-COMP:9845"/>
        <dbReference type="Rhea" id="RHEA-COMP:9846"/>
        <dbReference type="ChEBI" id="CHEBI:15378"/>
        <dbReference type="ChEBI" id="CHEBI:29969"/>
        <dbReference type="ChEBI" id="CHEBI:57856"/>
        <dbReference type="ChEBI" id="CHEBI:59789"/>
        <dbReference type="ChEBI" id="CHEBI:61929"/>
    </reaction>
</comment>
<comment type="subcellular location">
    <subcellularLocation>
        <location evidence="1">Nucleus</location>
    </subcellularLocation>
    <subcellularLocation>
        <location evidence="1">Chromosome</location>
    </subcellularLocation>
</comment>
<comment type="alternative products">
    <event type="alternative splicing"/>
    <isoform>
        <id>Q9ZUM9-1</id>
        <name>1</name>
        <sequence type="displayed"/>
    </isoform>
    <isoform>
        <id>Q9ZUM9-2</id>
        <name>2</name>
        <sequence type="described" ref="VSP_018134 VSP_018135"/>
    </isoform>
</comment>
<comment type="similarity">
    <text evidence="2">Belongs to the class V-like SAM-binding methyltransferase superfamily. Histone-lysine methyltransferase family. SET2 subfamily.</text>
</comment>
<reference key="1">
    <citation type="journal article" date="1999" name="Nature">
        <title>Sequence and analysis of chromosome 2 of the plant Arabidopsis thaliana.</title>
        <authorList>
            <person name="Lin X."/>
            <person name="Kaul S."/>
            <person name="Rounsley S.D."/>
            <person name="Shea T.P."/>
            <person name="Benito M.-I."/>
            <person name="Town C.D."/>
            <person name="Fujii C.Y."/>
            <person name="Mason T.M."/>
            <person name="Bowman C.L."/>
            <person name="Barnstead M.E."/>
            <person name="Feldblyum T.V."/>
            <person name="Buell C.R."/>
            <person name="Ketchum K.A."/>
            <person name="Lee J.J."/>
            <person name="Ronning C.M."/>
            <person name="Koo H.L."/>
            <person name="Moffat K.S."/>
            <person name="Cronin L.A."/>
            <person name="Shen M."/>
            <person name="Pai G."/>
            <person name="Van Aken S."/>
            <person name="Umayam L."/>
            <person name="Tallon L.J."/>
            <person name="Gill J.E."/>
            <person name="Adams M.D."/>
            <person name="Carrera A.J."/>
            <person name="Creasy T.H."/>
            <person name="Goodman H.M."/>
            <person name="Somerville C.R."/>
            <person name="Copenhaver G.P."/>
            <person name="Preuss D."/>
            <person name="Nierman W.C."/>
            <person name="White O."/>
            <person name="Eisen J.A."/>
            <person name="Salzberg S.L."/>
            <person name="Fraser C.M."/>
            <person name="Venter J.C."/>
        </authorList>
    </citation>
    <scope>NUCLEOTIDE SEQUENCE [LARGE SCALE GENOMIC DNA]</scope>
    <source>
        <strain>cv. Columbia</strain>
    </source>
</reference>
<reference key="2">
    <citation type="journal article" date="2017" name="Plant J.">
        <title>Araport11: a complete reannotation of the Arabidopsis thaliana reference genome.</title>
        <authorList>
            <person name="Cheng C.Y."/>
            <person name="Krishnakumar V."/>
            <person name="Chan A.P."/>
            <person name="Thibaud-Nissen F."/>
            <person name="Schobel S."/>
            <person name="Town C.D."/>
        </authorList>
    </citation>
    <scope>GENOME REANNOTATION</scope>
    <source>
        <strain>cv. Columbia</strain>
    </source>
</reference>
<reference key="3">
    <citation type="journal article" date="2003" name="Science">
        <title>Empirical analysis of transcriptional activity in the Arabidopsis genome.</title>
        <authorList>
            <person name="Yamada K."/>
            <person name="Lim J."/>
            <person name="Dale J.M."/>
            <person name="Chen H."/>
            <person name="Shinn P."/>
            <person name="Palm C.J."/>
            <person name="Southwick A.M."/>
            <person name="Wu H.C."/>
            <person name="Kim C.J."/>
            <person name="Nguyen M."/>
            <person name="Pham P.K."/>
            <person name="Cheuk R.F."/>
            <person name="Karlin-Newmann G."/>
            <person name="Liu S.X."/>
            <person name="Lam B."/>
            <person name="Sakano H."/>
            <person name="Wu T."/>
            <person name="Yu G."/>
            <person name="Miranda M."/>
            <person name="Quach H.L."/>
            <person name="Tripp M."/>
            <person name="Chang C.H."/>
            <person name="Lee J.M."/>
            <person name="Toriumi M.J."/>
            <person name="Chan M.M."/>
            <person name="Tang C.C."/>
            <person name="Onodera C.S."/>
            <person name="Deng J.M."/>
            <person name="Akiyama K."/>
            <person name="Ansari Y."/>
            <person name="Arakawa T."/>
            <person name="Banh J."/>
            <person name="Banno F."/>
            <person name="Bowser L."/>
            <person name="Brooks S.Y."/>
            <person name="Carninci P."/>
            <person name="Chao Q."/>
            <person name="Choy N."/>
            <person name="Enju A."/>
            <person name="Goldsmith A.D."/>
            <person name="Gurjal M."/>
            <person name="Hansen N.F."/>
            <person name="Hayashizaki Y."/>
            <person name="Johnson-Hopson C."/>
            <person name="Hsuan V.W."/>
            <person name="Iida K."/>
            <person name="Karnes M."/>
            <person name="Khan S."/>
            <person name="Koesema E."/>
            <person name="Ishida J."/>
            <person name="Jiang P.X."/>
            <person name="Jones T."/>
            <person name="Kawai J."/>
            <person name="Kamiya A."/>
            <person name="Meyers C."/>
            <person name="Nakajima M."/>
            <person name="Narusaka M."/>
            <person name="Seki M."/>
            <person name="Sakurai T."/>
            <person name="Satou M."/>
            <person name="Tamse R."/>
            <person name="Vaysberg M."/>
            <person name="Wallender E.K."/>
            <person name="Wong C."/>
            <person name="Yamamura Y."/>
            <person name="Yuan S."/>
            <person name="Shinozaki K."/>
            <person name="Davis R.W."/>
            <person name="Theologis A."/>
            <person name="Ecker J.R."/>
        </authorList>
    </citation>
    <scope>NUCLEOTIDE SEQUENCE [LARGE SCALE MRNA] (ISOFORMS 1 AND 2)</scope>
    <source>
        <strain>cv. Columbia</strain>
    </source>
</reference>
<reference key="4">
    <citation type="journal article" date="2001" name="Nucleic Acids Res.">
        <title>The Arabidopsis thaliana genome contains at least 29 active genes encoding SET domain proteins that can be assigned to four evolutionarily conserved classes.</title>
        <authorList>
            <person name="Baumbusch L.O."/>
            <person name="Thorstensen T."/>
            <person name="Krauss V."/>
            <person name="Fischer A."/>
            <person name="Naumann K."/>
            <person name="Assalkhou R."/>
            <person name="Schulz I."/>
            <person name="Reuter G."/>
            <person name="Aalen R.B."/>
        </authorList>
    </citation>
    <scope>NOMENCLATURE</scope>
</reference>